<keyword id="KW-0030">Aminoacyl-tRNA synthetase</keyword>
<keyword id="KW-0067">ATP-binding</keyword>
<keyword id="KW-0963">Cytoplasm</keyword>
<keyword id="KW-0436">Ligase</keyword>
<keyword id="KW-0479">Metal-binding</keyword>
<keyword id="KW-0547">Nucleotide-binding</keyword>
<keyword id="KW-0648">Protein biosynthesis</keyword>
<keyword id="KW-1185">Reference proteome</keyword>
<keyword id="KW-0694">RNA-binding</keyword>
<keyword id="KW-0820">tRNA-binding</keyword>
<keyword id="KW-0862">Zinc</keyword>
<dbReference type="EC" id="6.1.1.7" evidence="1"/>
<dbReference type="EMBL" id="CP000821">
    <property type="protein sequence ID" value="ABV35929.1"/>
    <property type="molecule type" value="Genomic_DNA"/>
</dbReference>
<dbReference type="RefSeq" id="WP_012141665.1">
    <property type="nucleotide sequence ID" value="NC_009831.1"/>
</dbReference>
<dbReference type="SMR" id="A8FSV6"/>
<dbReference type="STRING" id="425104.Ssed_1318"/>
<dbReference type="KEGG" id="sse:Ssed_1318"/>
<dbReference type="eggNOG" id="COG0013">
    <property type="taxonomic scope" value="Bacteria"/>
</dbReference>
<dbReference type="HOGENOM" id="CLU_004485_1_1_6"/>
<dbReference type="OrthoDB" id="9803884at2"/>
<dbReference type="Proteomes" id="UP000002015">
    <property type="component" value="Chromosome"/>
</dbReference>
<dbReference type="GO" id="GO:0005829">
    <property type="term" value="C:cytosol"/>
    <property type="evidence" value="ECO:0007669"/>
    <property type="project" value="TreeGrafter"/>
</dbReference>
<dbReference type="GO" id="GO:0004813">
    <property type="term" value="F:alanine-tRNA ligase activity"/>
    <property type="evidence" value="ECO:0007669"/>
    <property type="project" value="UniProtKB-UniRule"/>
</dbReference>
<dbReference type="GO" id="GO:0002161">
    <property type="term" value="F:aminoacyl-tRNA deacylase activity"/>
    <property type="evidence" value="ECO:0007669"/>
    <property type="project" value="TreeGrafter"/>
</dbReference>
<dbReference type="GO" id="GO:0005524">
    <property type="term" value="F:ATP binding"/>
    <property type="evidence" value="ECO:0007669"/>
    <property type="project" value="UniProtKB-UniRule"/>
</dbReference>
<dbReference type="GO" id="GO:0000049">
    <property type="term" value="F:tRNA binding"/>
    <property type="evidence" value="ECO:0007669"/>
    <property type="project" value="UniProtKB-KW"/>
</dbReference>
<dbReference type="GO" id="GO:0008270">
    <property type="term" value="F:zinc ion binding"/>
    <property type="evidence" value="ECO:0007669"/>
    <property type="project" value="UniProtKB-UniRule"/>
</dbReference>
<dbReference type="GO" id="GO:0006419">
    <property type="term" value="P:alanyl-tRNA aminoacylation"/>
    <property type="evidence" value="ECO:0007669"/>
    <property type="project" value="UniProtKB-UniRule"/>
</dbReference>
<dbReference type="GO" id="GO:0045892">
    <property type="term" value="P:negative regulation of DNA-templated transcription"/>
    <property type="evidence" value="ECO:0007669"/>
    <property type="project" value="TreeGrafter"/>
</dbReference>
<dbReference type="CDD" id="cd00673">
    <property type="entry name" value="AlaRS_core"/>
    <property type="match status" value="1"/>
</dbReference>
<dbReference type="FunFam" id="2.40.30.130:FF:000001">
    <property type="entry name" value="Alanine--tRNA ligase"/>
    <property type="match status" value="1"/>
</dbReference>
<dbReference type="FunFam" id="3.10.310.40:FF:000001">
    <property type="entry name" value="Alanine--tRNA ligase"/>
    <property type="match status" value="1"/>
</dbReference>
<dbReference type="FunFam" id="3.30.54.20:FF:000001">
    <property type="entry name" value="Alanine--tRNA ligase"/>
    <property type="match status" value="1"/>
</dbReference>
<dbReference type="FunFam" id="3.30.930.10:FF:000004">
    <property type="entry name" value="Alanine--tRNA ligase"/>
    <property type="match status" value="1"/>
</dbReference>
<dbReference type="FunFam" id="3.30.980.10:FF:000004">
    <property type="entry name" value="Alanine--tRNA ligase, cytoplasmic"/>
    <property type="match status" value="1"/>
</dbReference>
<dbReference type="Gene3D" id="2.40.30.130">
    <property type="match status" value="1"/>
</dbReference>
<dbReference type="Gene3D" id="3.10.310.40">
    <property type="match status" value="1"/>
</dbReference>
<dbReference type="Gene3D" id="3.30.54.20">
    <property type="match status" value="1"/>
</dbReference>
<dbReference type="Gene3D" id="6.10.250.550">
    <property type="match status" value="1"/>
</dbReference>
<dbReference type="Gene3D" id="3.30.930.10">
    <property type="entry name" value="Bira Bifunctional Protein, Domain 2"/>
    <property type="match status" value="1"/>
</dbReference>
<dbReference type="Gene3D" id="3.30.980.10">
    <property type="entry name" value="Threonyl-trna Synthetase, Chain A, domain 2"/>
    <property type="match status" value="1"/>
</dbReference>
<dbReference type="HAMAP" id="MF_00036_B">
    <property type="entry name" value="Ala_tRNA_synth_B"/>
    <property type="match status" value="1"/>
</dbReference>
<dbReference type="InterPro" id="IPR045864">
    <property type="entry name" value="aa-tRNA-synth_II/BPL/LPL"/>
</dbReference>
<dbReference type="InterPro" id="IPR002318">
    <property type="entry name" value="Ala-tRNA-lgiase_IIc"/>
</dbReference>
<dbReference type="InterPro" id="IPR018162">
    <property type="entry name" value="Ala-tRNA-ligase_IIc_anticod-bd"/>
</dbReference>
<dbReference type="InterPro" id="IPR018165">
    <property type="entry name" value="Ala-tRNA-synth_IIc_core"/>
</dbReference>
<dbReference type="InterPro" id="IPR018164">
    <property type="entry name" value="Ala-tRNA-synth_IIc_N"/>
</dbReference>
<dbReference type="InterPro" id="IPR050058">
    <property type="entry name" value="Ala-tRNA_ligase"/>
</dbReference>
<dbReference type="InterPro" id="IPR023033">
    <property type="entry name" value="Ala_tRNA_ligase_euk/bac"/>
</dbReference>
<dbReference type="InterPro" id="IPR003156">
    <property type="entry name" value="DHHA1_dom"/>
</dbReference>
<dbReference type="InterPro" id="IPR018163">
    <property type="entry name" value="Thr/Ala-tRNA-synth_IIc_edit"/>
</dbReference>
<dbReference type="InterPro" id="IPR009000">
    <property type="entry name" value="Transl_B-barrel_sf"/>
</dbReference>
<dbReference type="InterPro" id="IPR012947">
    <property type="entry name" value="tRNA_SAD"/>
</dbReference>
<dbReference type="NCBIfam" id="TIGR00344">
    <property type="entry name" value="alaS"/>
    <property type="match status" value="1"/>
</dbReference>
<dbReference type="PANTHER" id="PTHR11777:SF9">
    <property type="entry name" value="ALANINE--TRNA LIGASE, CYTOPLASMIC"/>
    <property type="match status" value="1"/>
</dbReference>
<dbReference type="PANTHER" id="PTHR11777">
    <property type="entry name" value="ALANYL-TRNA SYNTHETASE"/>
    <property type="match status" value="1"/>
</dbReference>
<dbReference type="Pfam" id="PF02272">
    <property type="entry name" value="DHHA1"/>
    <property type="match status" value="1"/>
</dbReference>
<dbReference type="Pfam" id="PF01411">
    <property type="entry name" value="tRNA-synt_2c"/>
    <property type="match status" value="1"/>
</dbReference>
<dbReference type="Pfam" id="PF07973">
    <property type="entry name" value="tRNA_SAD"/>
    <property type="match status" value="1"/>
</dbReference>
<dbReference type="PRINTS" id="PR00980">
    <property type="entry name" value="TRNASYNTHALA"/>
</dbReference>
<dbReference type="SMART" id="SM00863">
    <property type="entry name" value="tRNA_SAD"/>
    <property type="match status" value="1"/>
</dbReference>
<dbReference type="SUPFAM" id="SSF55681">
    <property type="entry name" value="Class II aaRS and biotin synthetases"/>
    <property type="match status" value="1"/>
</dbReference>
<dbReference type="SUPFAM" id="SSF101353">
    <property type="entry name" value="Putative anticodon-binding domain of alanyl-tRNA synthetase (AlaRS)"/>
    <property type="match status" value="1"/>
</dbReference>
<dbReference type="SUPFAM" id="SSF55186">
    <property type="entry name" value="ThrRS/AlaRS common domain"/>
    <property type="match status" value="1"/>
</dbReference>
<dbReference type="SUPFAM" id="SSF50447">
    <property type="entry name" value="Translation proteins"/>
    <property type="match status" value="1"/>
</dbReference>
<dbReference type="PROSITE" id="PS50860">
    <property type="entry name" value="AA_TRNA_LIGASE_II_ALA"/>
    <property type="match status" value="1"/>
</dbReference>
<evidence type="ECO:0000255" key="1">
    <source>
        <dbReference type="HAMAP-Rule" id="MF_00036"/>
    </source>
</evidence>
<comment type="function">
    <text evidence="1">Catalyzes the attachment of alanine to tRNA(Ala) in a two-step reaction: alanine is first activated by ATP to form Ala-AMP and then transferred to the acceptor end of tRNA(Ala). Also edits incorrectly charged Ser-tRNA(Ala) and Gly-tRNA(Ala) via its editing domain.</text>
</comment>
<comment type="catalytic activity">
    <reaction evidence="1">
        <text>tRNA(Ala) + L-alanine + ATP = L-alanyl-tRNA(Ala) + AMP + diphosphate</text>
        <dbReference type="Rhea" id="RHEA:12540"/>
        <dbReference type="Rhea" id="RHEA-COMP:9657"/>
        <dbReference type="Rhea" id="RHEA-COMP:9923"/>
        <dbReference type="ChEBI" id="CHEBI:30616"/>
        <dbReference type="ChEBI" id="CHEBI:33019"/>
        <dbReference type="ChEBI" id="CHEBI:57972"/>
        <dbReference type="ChEBI" id="CHEBI:78442"/>
        <dbReference type="ChEBI" id="CHEBI:78497"/>
        <dbReference type="ChEBI" id="CHEBI:456215"/>
        <dbReference type="EC" id="6.1.1.7"/>
    </reaction>
</comment>
<comment type="cofactor">
    <cofactor evidence="1">
        <name>Zn(2+)</name>
        <dbReference type="ChEBI" id="CHEBI:29105"/>
    </cofactor>
    <text evidence="1">Binds 1 zinc ion per subunit.</text>
</comment>
<comment type="subcellular location">
    <subcellularLocation>
        <location evidence="1">Cytoplasm</location>
    </subcellularLocation>
</comment>
<comment type="domain">
    <text evidence="1">Consists of three domains; the N-terminal catalytic domain, the editing domain and the C-terminal C-Ala domain. The editing domain removes incorrectly charged amino acids, while the C-Ala domain, along with tRNA(Ala), serves as a bridge to cooperatively bring together the editing and aminoacylation centers thus stimulating deacylation of misacylated tRNAs.</text>
</comment>
<comment type="similarity">
    <text evidence="1">Belongs to the class-II aminoacyl-tRNA synthetase family.</text>
</comment>
<gene>
    <name evidence="1" type="primary">alaS</name>
    <name type="ordered locus">Ssed_1318</name>
</gene>
<organism>
    <name type="scientific">Shewanella sediminis (strain HAW-EB3)</name>
    <dbReference type="NCBI Taxonomy" id="425104"/>
    <lineage>
        <taxon>Bacteria</taxon>
        <taxon>Pseudomonadati</taxon>
        <taxon>Pseudomonadota</taxon>
        <taxon>Gammaproteobacteria</taxon>
        <taxon>Alteromonadales</taxon>
        <taxon>Shewanellaceae</taxon>
        <taxon>Shewanella</taxon>
    </lineage>
</organism>
<accession>A8FSV6</accession>
<feature type="chain" id="PRO_0000347790" description="Alanine--tRNA ligase">
    <location>
        <begin position="1"/>
        <end position="874"/>
    </location>
</feature>
<feature type="binding site" evidence="1">
    <location>
        <position position="562"/>
    </location>
    <ligand>
        <name>Zn(2+)</name>
        <dbReference type="ChEBI" id="CHEBI:29105"/>
    </ligand>
</feature>
<feature type="binding site" evidence="1">
    <location>
        <position position="566"/>
    </location>
    <ligand>
        <name>Zn(2+)</name>
        <dbReference type="ChEBI" id="CHEBI:29105"/>
    </ligand>
</feature>
<feature type="binding site" evidence="1">
    <location>
        <position position="664"/>
    </location>
    <ligand>
        <name>Zn(2+)</name>
        <dbReference type="ChEBI" id="CHEBI:29105"/>
    </ligand>
</feature>
<feature type="binding site" evidence="1">
    <location>
        <position position="668"/>
    </location>
    <ligand>
        <name>Zn(2+)</name>
        <dbReference type="ChEBI" id="CHEBI:29105"/>
    </ligand>
</feature>
<proteinExistence type="inferred from homology"/>
<protein>
    <recommendedName>
        <fullName evidence="1">Alanine--tRNA ligase</fullName>
        <ecNumber evidence="1">6.1.1.7</ecNumber>
    </recommendedName>
    <alternativeName>
        <fullName evidence="1">Alanyl-tRNA synthetase</fullName>
        <shortName evidence="1">AlaRS</shortName>
    </alternativeName>
</protein>
<name>SYA_SHESH</name>
<sequence>MYQTTAALRSAFLEYFRTNGHQVVDSSSLVPVNDPTLLFTNAGMNQFKDVFLGEDKRSYTRATSSQRCVRAGGKHNDLDNVGYTARHHTFFEMLGNFSFGDYFKRDAISFAWNFLTQELKLPKERLCVTIYETDDEAYDIWTKEIGVPAENLIRIGDNKGAPYASDNFWQMGDTGPCGPCSEIFYDHGDHIWGGRPGTPEEDGDRFIEIWNIVFMQYNRQSDGEMLPLPKPSVDTGMGIERIAAIMQGVHSNYEIDIFQALIKKTAEILSVTDLENKSLRVISDHIRSCAFLIADGVMPSNEGRGYVLRRIIRRAVRHGNKLGASDSFFYKLVPTLIEVMGDAAKGLVATQAIVEKSLKAEEEQFARTLERGLGILDGALNALKGDVLDGETAFKLYDTYGFPVDLTADVCREREITVDEAGFEVAMAEQRSRAQAAGQFETDYNDSLKIDELTHFSGYTELTAPGKITAIYMAGESVNSLSAGDEAVIVLDSTPFYGESGGQCGDRGVLSAKGIEFDVKDTQKYGQAVGHQGALTSGTLSVGDSLEANVDKKLRHRTELNHSVTHLLHAALRQLLGTHVTQKGSLVDSERLRFDFSHFEGVKPEELKAVEDLVNTQIRRNHKLSAEVMDMDQAKEKGAMALFGEKYTDEVRVVTMGDFSIELCGGTHVGRTGDIGLFKITSEGGIAAGVRRIEAVTGAAAMAYVAGQKAELDQAAALLKADSASVVSKLKAQLDRTKLLEKELSQLKDKLAAATSADLAGEAQQVNGVNVLVKKLDGVEAGALRGLQDELKQKLGSGIVVLGIAGDAKVNLIVGVTKDLTSKVKAGELVASIASQVGGKGGGRPDMAQAGGSQPENLDSALEQVIPWLTERLA</sequence>
<reference key="1">
    <citation type="submission" date="2007-08" db="EMBL/GenBank/DDBJ databases">
        <title>Complete sequence of Shewanella sediminis HAW-EB3.</title>
        <authorList>
            <consortium name="US DOE Joint Genome Institute"/>
            <person name="Copeland A."/>
            <person name="Lucas S."/>
            <person name="Lapidus A."/>
            <person name="Barry K."/>
            <person name="Glavina del Rio T."/>
            <person name="Dalin E."/>
            <person name="Tice H."/>
            <person name="Pitluck S."/>
            <person name="Chertkov O."/>
            <person name="Brettin T."/>
            <person name="Bruce D."/>
            <person name="Detter J.C."/>
            <person name="Han C."/>
            <person name="Schmutz J."/>
            <person name="Larimer F."/>
            <person name="Land M."/>
            <person name="Hauser L."/>
            <person name="Kyrpides N."/>
            <person name="Kim E."/>
            <person name="Zhao J.-S."/>
            <person name="Richardson P."/>
        </authorList>
    </citation>
    <scope>NUCLEOTIDE SEQUENCE [LARGE SCALE GENOMIC DNA]</scope>
    <source>
        <strain>HAW-EB3</strain>
    </source>
</reference>